<organism>
    <name type="scientific">Spodoptera frugiperda</name>
    <name type="common">Fall armyworm</name>
    <dbReference type="NCBI Taxonomy" id="7108"/>
    <lineage>
        <taxon>Eukaryota</taxon>
        <taxon>Metazoa</taxon>
        <taxon>Ecdysozoa</taxon>
        <taxon>Arthropoda</taxon>
        <taxon>Hexapoda</taxon>
        <taxon>Insecta</taxon>
        <taxon>Pterygota</taxon>
        <taxon>Neoptera</taxon>
        <taxon>Endopterygota</taxon>
        <taxon>Lepidoptera</taxon>
        <taxon>Glossata</taxon>
        <taxon>Ditrysia</taxon>
        <taxon>Noctuoidea</taxon>
        <taxon>Noctuidae</taxon>
        <taxon>Amphipyrinae</taxon>
        <taxon>Spodoptera</taxon>
    </lineage>
</organism>
<protein>
    <recommendedName>
        <fullName evidence="1">Large ribosomal subunit protein eL39</fullName>
    </recommendedName>
    <alternativeName>
        <fullName>60S ribosomal protein L39</fullName>
    </alternativeName>
</protein>
<gene>
    <name type="primary">RpL39</name>
</gene>
<sequence length="51" mass="6356">MSAHKTFIIKRKLAKKLKQNRPIPQWVRMRTGNTIRYNAKRRHWRRTKLKL</sequence>
<comment type="similarity">
    <text evidence="1">Belongs to the eukaryotic ribosomal protein eL39 family.</text>
</comment>
<accession>Q962S4</accession>
<evidence type="ECO:0000305" key="1"/>
<proteinExistence type="inferred from homology"/>
<keyword id="KW-0687">Ribonucleoprotein</keyword>
<keyword id="KW-0689">Ribosomal protein</keyword>
<feature type="chain" id="PRO_0000127033" description="Large ribosomal subunit protein eL39">
    <location>
        <begin position="1"/>
        <end position="51"/>
    </location>
</feature>
<reference key="1">
    <citation type="journal article" date="2003" name="Bioinformatics">
        <title>Annotation pattern of ESTs from Spodoptera frugiperda Sf9 cells and analysis of the ribosomal protein genes reveal insect-specific features and unexpectedly low codon usage bias.</title>
        <authorList>
            <person name="Landais I."/>
            <person name="Ogliastro M."/>
            <person name="Mita K."/>
            <person name="Nohata J."/>
            <person name="Lopez-Ferber M."/>
            <person name="Duonor-Cerutti M."/>
            <person name="Shimada T."/>
            <person name="Fournier P."/>
            <person name="Devauchelle G."/>
        </authorList>
    </citation>
    <scope>NUCLEOTIDE SEQUENCE [LARGE SCALE MRNA]</scope>
</reference>
<dbReference type="EMBL" id="AF400202">
    <property type="protein sequence ID" value="AAK92174.1"/>
    <property type="molecule type" value="mRNA"/>
</dbReference>
<dbReference type="SMR" id="Q962S4"/>
<dbReference type="EnsemblMetazoa" id="XM_035576166.2">
    <property type="protein sequence ID" value="XP_035432059.1"/>
    <property type="gene ID" value="LOC118263925"/>
</dbReference>
<dbReference type="OrthoDB" id="6332053at2759"/>
<dbReference type="Proteomes" id="UP000829999">
    <property type="component" value="Unplaced"/>
</dbReference>
<dbReference type="GO" id="GO:0022625">
    <property type="term" value="C:cytosolic large ribosomal subunit"/>
    <property type="evidence" value="ECO:0007669"/>
    <property type="project" value="TreeGrafter"/>
</dbReference>
<dbReference type="GO" id="GO:0003735">
    <property type="term" value="F:structural constituent of ribosome"/>
    <property type="evidence" value="ECO:0007669"/>
    <property type="project" value="InterPro"/>
</dbReference>
<dbReference type="GO" id="GO:0006412">
    <property type="term" value="P:translation"/>
    <property type="evidence" value="ECO:0007669"/>
    <property type="project" value="InterPro"/>
</dbReference>
<dbReference type="FunFam" id="1.10.1620.10:FF:000001">
    <property type="entry name" value="60S ribosomal protein-like L39"/>
    <property type="match status" value="1"/>
</dbReference>
<dbReference type="Gene3D" id="1.10.1620.10">
    <property type="entry name" value="Ribosomal protein L39e"/>
    <property type="match status" value="1"/>
</dbReference>
<dbReference type="HAMAP" id="MF_00629">
    <property type="entry name" value="Ribosomal_eL39"/>
    <property type="match status" value="1"/>
</dbReference>
<dbReference type="InterPro" id="IPR000077">
    <property type="entry name" value="Ribosomal_eL39"/>
</dbReference>
<dbReference type="InterPro" id="IPR020083">
    <property type="entry name" value="Ribosomal_eL39_CS"/>
</dbReference>
<dbReference type="InterPro" id="IPR023626">
    <property type="entry name" value="Ribosomal_eL39_dom_sf"/>
</dbReference>
<dbReference type="PANTHER" id="PTHR19970:SF0">
    <property type="entry name" value="LARGE RIBOSOMAL SUBUNIT PROTEIN EL39"/>
    <property type="match status" value="1"/>
</dbReference>
<dbReference type="PANTHER" id="PTHR19970">
    <property type="entry name" value="RIBOSOMAL PROTEIN L39E"/>
    <property type="match status" value="1"/>
</dbReference>
<dbReference type="Pfam" id="PF00832">
    <property type="entry name" value="Ribosomal_L39"/>
    <property type="match status" value="1"/>
</dbReference>
<dbReference type="SUPFAM" id="SSF48662">
    <property type="entry name" value="Ribosomal protein L39e"/>
    <property type="match status" value="1"/>
</dbReference>
<dbReference type="PROSITE" id="PS00051">
    <property type="entry name" value="RIBOSOMAL_L39E"/>
    <property type="match status" value="1"/>
</dbReference>
<name>RL39_SPOFR</name>